<sequence length="424" mass="46268">MARIGESADLLKCSFCGKSQKQVQQLIAGPGVYICDECVELCNEIIEERLAEAGEEASSEFDLPKPKEIFGFLEEYVIGQEQAKRSLAVAVYNHYKRVRARQAITAADAIDDVEIAKSNILLIGPTGCGKTYLAQTLARRLNVPFAVADATALTEAGYVGEDVENILLKLIQAADYDVKRAETGIIYIDEVDKIARKAENPSITRDVSGEGVQQALLKILEGTVASVPPQGGRKHPHQEFIQIDTTNVLFIVAGAFAGLEDIISNRAGKKGIGFGAPLHSKGDDINLFSEVLPEDLHKFGLIPEFIGRLPVVTTVTQLDQDALMQILTEPKNALVRQYQRMFELDGVQLEFDHAALEAIADLAVLRKTGARGLRAIMEEVLGPIMFEVPSSSEVARVVVTKEAVLENAAPTIVPHRPRREEKSA</sequence>
<gene>
    <name evidence="1" type="primary">clpX</name>
    <name type="ordered locus">Lxx07870</name>
</gene>
<evidence type="ECO:0000255" key="1">
    <source>
        <dbReference type="HAMAP-Rule" id="MF_00175"/>
    </source>
</evidence>
<evidence type="ECO:0000255" key="2">
    <source>
        <dbReference type="PROSITE-ProRule" id="PRU01250"/>
    </source>
</evidence>
<proteinExistence type="inferred from homology"/>
<name>CLPX_LEIXX</name>
<keyword id="KW-0067">ATP-binding</keyword>
<keyword id="KW-0143">Chaperone</keyword>
<keyword id="KW-0479">Metal-binding</keyword>
<keyword id="KW-0547">Nucleotide-binding</keyword>
<keyword id="KW-1185">Reference proteome</keyword>
<keyword id="KW-0862">Zinc</keyword>
<feature type="chain" id="PRO_0000160375" description="ATP-dependent Clp protease ATP-binding subunit ClpX">
    <location>
        <begin position="1"/>
        <end position="424"/>
    </location>
</feature>
<feature type="domain" description="ClpX-type ZB" evidence="2">
    <location>
        <begin position="1"/>
        <end position="54"/>
    </location>
</feature>
<feature type="binding site" evidence="2">
    <location>
        <position position="13"/>
    </location>
    <ligand>
        <name>Zn(2+)</name>
        <dbReference type="ChEBI" id="CHEBI:29105"/>
    </ligand>
</feature>
<feature type="binding site" evidence="2">
    <location>
        <position position="16"/>
    </location>
    <ligand>
        <name>Zn(2+)</name>
        <dbReference type="ChEBI" id="CHEBI:29105"/>
    </ligand>
</feature>
<feature type="binding site" evidence="2">
    <location>
        <position position="35"/>
    </location>
    <ligand>
        <name>Zn(2+)</name>
        <dbReference type="ChEBI" id="CHEBI:29105"/>
    </ligand>
</feature>
<feature type="binding site" evidence="2">
    <location>
        <position position="38"/>
    </location>
    <ligand>
        <name>Zn(2+)</name>
        <dbReference type="ChEBI" id="CHEBI:29105"/>
    </ligand>
</feature>
<feature type="binding site" evidence="1">
    <location>
        <begin position="125"/>
        <end position="132"/>
    </location>
    <ligand>
        <name>ATP</name>
        <dbReference type="ChEBI" id="CHEBI:30616"/>
    </ligand>
</feature>
<accession>Q6AFZ6</accession>
<reference key="1">
    <citation type="journal article" date="2004" name="Mol. Plant Microbe Interact.">
        <title>The genome sequence of the Gram-positive sugarcane pathogen Leifsonia xyli subsp. xyli.</title>
        <authorList>
            <person name="Monteiro-Vitorello C.B."/>
            <person name="Camargo L.E.A."/>
            <person name="Van Sluys M.A."/>
            <person name="Kitajima J.P."/>
            <person name="Truffi D."/>
            <person name="do Amaral A.M."/>
            <person name="Harakava R."/>
            <person name="de Oliveira J.C.F."/>
            <person name="Wood D."/>
            <person name="de Oliveira M.C."/>
            <person name="Miyaki C.Y."/>
            <person name="Takita M.A."/>
            <person name="da Silva A.C.R."/>
            <person name="Furlan L.R."/>
            <person name="Carraro D.M."/>
            <person name="Camarotte G."/>
            <person name="Almeida N.F. Jr."/>
            <person name="Carrer H."/>
            <person name="Coutinho L.L."/>
            <person name="El-Dorry H.A."/>
            <person name="Ferro M.I.T."/>
            <person name="Gagliardi P.R."/>
            <person name="Giglioti E."/>
            <person name="Goldman M.H.S."/>
            <person name="Goldman G.H."/>
            <person name="Kimura E.T."/>
            <person name="Ferro E.S."/>
            <person name="Kuramae E.E."/>
            <person name="Lemos E.G.M."/>
            <person name="Lemos M.V.F."/>
            <person name="Mauro S.M.Z."/>
            <person name="Machado M.A."/>
            <person name="Marino C.L."/>
            <person name="Menck C.F."/>
            <person name="Nunes L.R."/>
            <person name="Oliveira R.C."/>
            <person name="Pereira G.G."/>
            <person name="Siqueira W."/>
            <person name="de Souza A.A."/>
            <person name="Tsai S.M."/>
            <person name="Zanca A.S."/>
            <person name="Simpson A.J.G."/>
            <person name="Brumbley S.M."/>
            <person name="Setubal J.C."/>
        </authorList>
    </citation>
    <scope>NUCLEOTIDE SEQUENCE [LARGE SCALE GENOMIC DNA]</scope>
    <source>
        <strain>CTCB07</strain>
    </source>
</reference>
<comment type="function">
    <text evidence="1">ATP-dependent specificity component of the Clp protease. It directs the protease to specific substrates. Can perform chaperone functions in the absence of ClpP.</text>
</comment>
<comment type="subunit">
    <text evidence="1">Component of the ClpX-ClpP complex. Forms a hexameric ring that, in the presence of ATP, binds to fourteen ClpP subunits assembled into a disk-like structure with a central cavity, resembling the structure of eukaryotic proteasomes.</text>
</comment>
<comment type="similarity">
    <text evidence="1">Belongs to the ClpX chaperone family.</text>
</comment>
<dbReference type="EMBL" id="AE016822">
    <property type="protein sequence ID" value="AAT88699.1"/>
    <property type="molecule type" value="Genomic_DNA"/>
</dbReference>
<dbReference type="RefSeq" id="WP_011185697.1">
    <property type="nucleotide sequence ID" value="NC_006087.1"/>
</dbReference>
<dbReference type="SMR" id="Q6AFZ6"/>
<dbReference type="STRING" id="281090.Lxx07870"/>
<dbReference type="KEGG" id="lxx:Lxx07870"/>
<dbReference type="eggNOG" id="COG1219">
    <property type="taxonomic scope" value="Bacteria"/>
</dbReference>
<dbReference type="HOGENOM" id="CLU_014218_8_2_11"/>
<dbReference type="Proteomes" id="UP000001306">
    <property type="component" value="Chromosome"/>
</dbReference>
<dbReference type="GO" id="GO:0009376">
    <property type="term" value="C:HslUV protease complex"/>
    <property type="evidence" value="ECO:0007669"/>
    <property type="project" value="TreeGrafter"/>
</dbReference>
<dbReference type="GO" id="GO:0005524">
    <property type="term" value="F:ATP binding"/>
    <property type="evidence" value="ECO:0007669"/>
    <property type="project" value="UniProtKB-UniRule"/>
</dbReference>
<dbReference type="GO" id="GO:0016887">
    <property type="term" value="F:ATP hydrolysis activity"/>
    <property type="evidence" value="ECO:0007669"/>
    <property type="project" value="InterPro"/>
</dbReference>
<dbReference type="GO" id="GO:0140662">
    <property type="term" value="F:ATP-dependent protein folding chaperone"/>
    <property type="evidence" value="ECO:0007669"/>
    <property type="project" value="InterPro"/>
</dbReference>
<dbReference type="GO" id="GO:0046983">
    <property type="term" value="F:protein dimerization activity"/>
    <property type="evidence" value="ECO:0007669"/>
    <property type="project" value="InterPro"/>
</dbReference>
<dbReference type="GO" id="GO:0051082">
    <property type="term" value="F:unfolded protein binding"/>
    <property type="evidence" value="ECO:0007669"/>
    <property type="project" value="UniProtKB-UniRule"/>
</dbReference>
<dbReference type="GO" id="GO:0008270">
    <property type="term" value="F:zinc ion binding"/>
    <property type="evidence" value="ECO:0007669"/>
    <property type="project" value="InterPro"/>
</dbReference>
<dbReference type="GO" id="GO:0051301">
    <property type="term" value="P:cell division"/>
    <property type="evidence" value="ECO:0007669"/>
    <property type="project" value="TreeGrafter"/>
</dbReference>
<dbReference type="GO" id="GO:0051603">
    <property type="term" value="P:proteolysis involved in protein catabolic process"/>
    <property type="evidence" value="ECO:0007669"/>
    <property type="project" value="TreeGrafter"/>
</dbReference>
<dbReference type="CDD" id="cd19497">
    <property type="entry name" value="RecA-like_ClpX"/>
    <property type="match status" value="1"/>
</dbReference>
<dbReference type="FunFam" id="1.10.8.60:FF:000002">
    <property type="entry name" value="ATP-dependent Clp protease ATP-binding subunit ClpX"/>
    <property type="match status" value="1"/>
</dbReference>
<dbReference type="FunFam" id="3.40.50.300:FF:000005">
    <property type="entry name" value="ATP-dependent Clp protease ATP-binding subunit ClpX"/>
    <property type="match status" value="1"/>
</dbReference>
<dbReference type="Gene3D" id="1.10.8.60">
    <property type="match status" value="1"/>
</dbReference>
<dbReference type="Gene3D" id="6.20.220.10">
    <property type="entry name" value="ClpX chaperone, C4-type zinc finger domain"/>
    <property type="match status" value="1"/>
</dbReference>
<dbReference type="Gene3D" id="3.40.50.300">
    <property type="entry name" value="P-loop containing nucleotide triphosphate hydrolases"/>
    <property type="match status" value="1"/>
</dbReference>
<dbReference type="HAMAP" id="MF_00175">
    <property type="entry name" value="ClpX"/>
    <property type="match status" value="1"/>
</dbReference>
<dbReference type="InterPro" id="IPR003593">
    <property type="entry name" value="AAA+_ATPase"/>
</dbReference>
<dbReference type="InterPro" id="IPR050052">
    <property type="entry name" value="ATP-dep_Clp_protease_ClpX"/>
</dbReference>
<dbReference type="InterPro" id="IPR003959">
    <property type="entry name" value="ATPase_AAA_core"/>
</dbReference>
<dbReference type="InterPro" id="IPR019489">
    <property type="entry name" value="Clp_ATPase_C"/>
</dbReference>
<dbReference type="InterPro" id="IPR004487">
    <property type="entry name" value="Clp_protease_ATP-bd_su_ClpX"/>
</dbReference>
<dbReference type="InterPro" id="IPR046425">
    <property type="entry name" value="ClpX_bact"/>
</dbReference>
<dbReference type="InterPro" id="IPR027417">
    <property type="entry name" value="P-loop_NTPase"/>
</dbReference>
<dbReference type="InterPro" id="IPR010603">
    <property type="entry name" value="Znf_CppX_C4"/>
</dbReference>
<dbReference type="InterPro" id="IPR038366">
    <property type="entry name" value="Znf_CppX_C4_sf"/>
</dbReference>
<dbReference type="NCBIfam" id="TIGR00382">
    <property type="entry name" value="clpX"/>
    <property type="match status" value="1"/>
</dbReference>
<dbReference type="NCBIfam" id="NF003745">
    <property type="entry name" value="PRK05342.1"/>
    <property type="match status" value="1"/>
</dbReference>
<dbReference type="PANTHER" id="PTHR48102:SF7">
    <property type="entry name" value="ATP-DEPENDENT CLP PROTEASE ATP-BINDING SUBUNIT CLPX-LIKE, MITOCHONDRIAL"/>
    <property type="match status" value="1"/>
</dbReference>
<dbReference type="PANTHER" id="PTHR48102">
    <property type="entry name" value="ATP-DEPENDENT CLP PROTEASE ATP-BINDING SUBUNIT CLPX-LIKE, MITOCHONDRIAL-RELATED"/>
    <property type="match status" value="1"/>
</dbReference>
<dbReference type="Pfam" id="PF07724">
    <property type="entry name" value="AAA_2"/>
    <property type="match status" value="1"/>
</dbReference>
<dbReference type="Pfam" id="PF10431">
    <property type="entry name" value="ClpB_D2-small"/>
    <property type="match status" value="1"/>
</dbReference>
<dbReference type="Pfam" id="PF06689">
    <property type="entry name" value="zf-C4_ClpX"/>
    <property type="match status" value="1"/>
</dbReference>
<dbReference type="SMART" id="SM00382">
    <property type="entry name" value="AAA"/>
    <property type="match status" value="1"/>
</dbReference>
<dbReference type="SMART" id="SM01086">
    <property type="entry name" value="ClpB_D2-small"/>
    <property type="match status" value="1"/>
</dbReference>
<dbReference type="SMART" id="SM00994">
    <property type="entry name" value="zf-C4_ClpX"/>
    <property type="match status" value="1"/>
</dbReference>
<dbReference type="SUPFAM" id="SSF57716">
    <property type="entry name" value="Glucocorticoid receptor-like (DNA-binding domain)"/>
    <property type="match status" value="1"/>
</dbReference>
<dbReference type="SUPFAM" id="SSF52540">
    <property type="entry name" value="P-loop containing nucleoside triphosphate hydrolases"/>
    <property type="match status" value="1"/>
</dbReference>
<dbReference type="PROSITE" id="PS51902">
    <property type="entry name" value="CLPX_ZB"/>
    <property type="match status" value="1"/>
</dbReference>
<protein>
    <recommendedName>
        <fullName evidence="1">ATP-dependent Clp protease ATP-binding subunit ClpX</fullName>
    </recommendedName>
</protein>
<organism>
    <name type="scientific">Leifsonia xyli subsp. xyli (strain CTCB07)</name>
    <dbReference type="NCBI Taxonomy" id="281090"/>
    <lineage>
        <taxon>Bacteria</taxon>
        <taxon>Bacillati</taxon>
        <taxon>Actinomycetota</taxon>
        <taxon>Actinomycetes</taxon>
        <taxon>Micrococcales</taxon>
        <taxon>Microbacteriaceae</taxon>
        <taxon>Leifsonia</taxon>
    </lineage>
</organism>